<sequence length="288" mass="32280">MKGSTVHTKWQAYCRLMRIDKPIGSLLLLWPTLWALWLAGRGIPEAKILVVFVLGVFFMRAAGCVVNDYADRHIDGFVKRTASRPLPSGTISEKESKILFVVLILLSFGLVLTLNSMTIWLSLAALALAWIYPFMKRVTHLPQVVLGAAFGWSIPMGFAAVSESLPLVCWLLLLANICWTVAYDTQYAMVDRDDDLRIGVKSTAILFGQHDKLIIGLLQLATLLLMVAIGWLMNLGGAFYWSILLAGALFTHQQKMIAQREREPCFRAFLNNNYVGLVLFLGILISYW</sequence>
<feature type="chain" id="PRO_0000262862" description="4-hydroxybenzoate octaprenyltransferase">
    <location>
        <begin position="1"/>
        <end position="288"/>
    </location>
</feature>
<feature type="transmembrane region" description="Helical" evidence="1">
    <location>
        <begin position="23"/>
        <end position="43"/>
    </location>
</feature>
<feature type="transmembrane region" description="Helical" evidence="1">
    <location>
        <begin position="46"/>
        <end position="66"/>
    </location>
</feature>
<feature type="transmembrane region" description="Helical" evidence="1">
    <location>
        <begin position="98"/>
        <end position="118"/>
    </location>
</feature>
<feature type="transmembrane region" description="Helical" evidence="1">
    <location>
        <begin position="141"/>
        <end position="161"/>
    </location>
</feature>
<feature type="transmembrane region" description="Helical" evidence="1">
    <location>
        <begin position="163"/>
        <end position="183"/>
    </location>
</feature>
<feature type="transmembrane region" description="Helical" evidence="1">
    <location>
        <begin position="213"/>
        <end position="233"/>
    </location>
</feature>
<feature type="transmembrane region" description="Helical" evidence="1">
    <location>
        <begin position="234"/>
        <end position="254"/>
    </location>
</feature>
<feature type="transmembrane region" description="Helical" evidence="1">
    <location>
        <begin position="268"/>
        <end position="288"/>
    </location>
</feature>
<proteinExistence type="inferred from homology"/>
<accession>Q7CKP5</accession>
<accession>Q74XF7</accession>
<name>UBIA_YERPE</name>
<dbReference type="EC" id="2.5.1.39" evidence="1"/>
<dbReference type="EMBL" id="AE009952">
    <property type="protein sequence ID" value="AAM84157.1"/>
    <property type="molecule type" value="Genomic_DNA"/>
</dbReference>
<dbReference type="EMBL" id="AL590842">
    <property type="protein sequence ID" value="CAL18996.1"/>
    <property type="molecule type" value="Genomic_DNA"/>
</dbReference>
<dbReference type="EMBL" id="AE017042">
    <property type="protein sequence ID" value="AAS60737.1"/>
    <property type="molecule type" value="Genomic_DNA"/>
</dbReference>
<dbReference type="PIR" id="AB0039">
    <property type="entry name" value="AB0039"/>
</dbReference>
<dbReference type="RefSeq" id="WP_002209088.1">
    <property type="nucleotide sequence ID" value="NZ_WUCM01000014.1"/>
</dbReference>
<dbReference type="RefSeq" id="YP_002345392.1">
    <property type="nucleotide sequence ID" value="NC_003143.1"/>
</dbReference>
<dbReference type="SMR" id="Q7CKP5"/>
<dbReference type="IntAct" id="Q7CKP5">
    <property type="interactions" value="1"/>
</dbReference>
<dbReference type="STRING" id="214092.YPO0311"/>
<dbReference type="PaxDb" id="214092-YPO0311"/>
<dbReference type="DNASU" id="1145516"/>
<dbReference type="EnsemblBacteria" id="AAS60737">
    <property type="protein sequence ID" value="AAS60737"/>
    <property type="gene ID" value="YP_0467"/>
</dbReference>
<dbReference type="GeneID" id="57974293"/>
<dbReference type="KEGG" id="ype:YPO0311"/>
<dbReference type="KEGG" id="ypk:y0569"/>
<dbReference type="KEGG" id="ypm:YP_0467"/>
<dbReference type="PATRIC" id="fig|214092.21.peg.546"/>
<dbReference type="eggNOG" id="COG0382">
    <property type="taxonomic scope" value="Bacteria"/>
</dbReference>
<dbReference type="HOGENOM" id="CLU_034879_1_0_6"/>
<dbReference type="OMA" id="KFEHTIF"/>
<dbReference type="OrthoDB" id="9782418at2"/>
<dbReference type="UniPathway" id="UPA00232"/>
<dbReference type="Proteomes" id="UP000000815">
    <property type="component" value="Chromosome"/>
</dbReference>
<dbReference type="Proteomes" id="UP000001019">
    <property type="component" value="Chromosome"/>
</dbReference>
<dbReference type="Proteomes" id="UP000002490">
    <property type="component" value="Chromosome"/>
</dbReference>
<dbReference type="GO" id="GO:0005886">
    <property type="term" value="C:plasma membrane"/>
    <property type="evidence" value="ECO:0000318"/>
    <property type="project" value="GO_Central"/>
</dbReference>
<dbReference type="GO" id="GO:0008412">
    <property type="term" value="F:4-hydroxybenzoate polyprenyltransferase activity"/>
    <property type="evidence" value="ECO:0000318"/>
    <property type="project" value="GO_Central"/>
</dbReference>
<dbReference type="GO" id="GO:0006744">
    <property type="term" value="P:ubiquinone biosynthetic process"/>
    <property type="evidence" value="ECO:0000318"/>
    <property type="project" value="GO_Central"/>
</dbReference>
<dbReference type="CDD" id="cd13959">
    <property type="entry name" value="PT_UbiA_COQ2"/>
    <property type="match status" value="1"/>
</dbReference>
<dbReference type="FunFam" id="1.10.357.140:FF:000002">
    <property type="entry name" value="4-hydroxybenzoate octaprenyltransferase"/>
    <property type="match status" value="1"/>
</dbReference>
<dbReference type="FunFam" id="1.20.120.1780:FF:000001">
    <property type="entry name" value="4-hydroxybenzoate octaprenyltransferase"/>
    <property type="match status" value="1"/>
</dbReference>
<dbReference type="Gene3D" id="1.10.357.140">
    <property type="entry name" value="UbiA prenyltransferase"/>
    <property type="match status" value="1"/>
</dbReference>
<dbReference type="Gene3D" id="1.20.120.1780">
    <property type="entry name" value="UbiA prenyltransferase"/>
    <property type="match status" value="1"/>
</dbReference>
<dbReference type="HAMAP" id="MF_01635">
    <property type="entry name" value="UbiA"/>
    <property type="match status" value="1"/>
</dbReference>
<dbReference type="InterPro" id="IPR006370">
    <property type="entry name" value="HB_polyprenyltransferase-like"/>
</dbReference>
<dbReference type="InterPro" id="IPR039653">
    <property type="entry name" value="Prenyltransferase"/>
</dbReference>
<dbReference type="InterPro" id="IPR000537">
    <property type="entry name" value="UbiA_prenyltransferase"/>
</dbReference>
<dbReference type="InterPro" id="IPR030470">
    <property type="entry name" value="UbiA_prenylTrfase_CS"/>
</dbReference>
<dbReference type="InterPro" id="IPR044878">
    <property type="entry name" value="UbiA_sf"/>
</dbReference>
<dbReference type="NCBIfam" id="TIGR01474">
    <property type="entry name" value="ubiA_proteo"/>
    <property type="match status" value="1"/>
</dbReference>
<dbReference type="PANTHER" id="PTHR11048:SF28">
    <property type="entry name" value="4-HYDROXYBENZOATE POLYPRENYLTRANSFERASE, MITOCHONDRIAL"/>
    <property type="match status" value="1"/>
</dbReference>
<dbReference type="PANTHER" id="PTHR11048">
    <property type="entry name" value="PRENYLTRANSFERASES"/>
    <property type="match status" value="1"/>
</dbReference>
<dbReference type="Pfam" id="PF01040">
    <property type="entry name" value="UbiA"/>
    <property type="match status" value="1"/>
</dbReference>
<dbReference type="PROSITE" id="PS00943">
    <property type="entry name" value="UBIA"/>
    <property type="match status" value="1"/>
</dbReference>
<comment type="function">
    <text evidence="1">Catalyzes the prenylation of para-hydroxybenzoate (PHB) with an all-trans polyprenyl group. Mediates the second step in the final reaction sequence of ubiquinone-8 (UQ-8) biosynthesis, which is the condensation of the polyisoprenoid side chain with PHB, generating the first membrane-bound Q intermediate 3-octaprenyl-4-hydroxybenzoate.</text>
</comment>
<comment type="catalytic activity">
    <reaction evidence="1">
        <text>all-trans-octaprenyl diphosphate + 4-hydroxybenzoate = 4-hydroxy-3-(all-trans-octaprenyl)benzoate + diphosphate</text>
        <dbReference type="Rhea" id="RHEA:27782"/>
        <dbReference type="ChEBI" id="CHEBI:1617"/>
        <dbReference type="ChEBI" id="CHEBI:17879"/>
        <dbReference type="ChEBI" id="CHEBI:33019"/>
        <dbReference type="ChEBI" id="CHEBI:57711"/>
        <dbReference type="EC" id="2.5.1.39"/>
    </reaction>
</comment>
<comment type="cofactor">
    <cofactor evidence="1">
        <name>Mg(2+)</name>
        <dbReference type="ChEBI" id="CHEBI:18420"/>
    </cofactor>
</comment>
<comment type="pathway">
    <text evidence="1">Cofactor biosynthesis; ubiquinone biosynthesis.</text>
</comment>
<comment type="subcellular location">
    <subcellularLocation>
        <location evidence="1">Cell inner membrane</location>
        <topology evidence="1">Multi-pass membrane protein</topology>
    </subcellularLocation>
</comment>
<comment type="similarity">
    <text evidence="1">Belongs to the UbiA prenyltransferase family.</text>
</comment>
<reference key="1">
    <citation type="journal article" date="2002" name="J. Bacteriol.">
        <title>Genome sequence of Yersinia pestis KIM.</title>
        <authorList>
            <person name="Deng W."/>
            <person name="Burland V."/>
            <person name="Plunkett G. III"/>
            <person name="Boutin A."/>
            <person name="Mayhew G.F."/>
            <person name="Liss P."/>
            <person name="Perna N.T."/>
            <person name="Rose D.J."/>
            <person name="Mau B."/>
            <person name="Zhou S."/>
            <person name="Schwartz D.C."/>
            <person name="Fetherston J.D."/>
            <person name="Lindler L.E."/>
            <person name="Brubaker R.R."/>
            <person name="Plano G.V."/>
            <person name="Straley S.C."/>
            <person name="McDonough K.A."/>
            <person name="Nilles M.L."/>
            <person name="Matson J.S."/>
            <person name="Blattner F.R."/>
            <person name="Perry R.D."/>
        </authorList>
    </citation>
    <scope>NUCLEOTIDE SEQUENCE [LARGE SCALE GENOMIC DNA]</scope>
    <source>
        <strain>KIM10+ / Biovar Mediaevalis</strain>
    </source>
</reference>
<reference key="2">
    <citation type="journal article" date="2001" name="Nature">
        <title>Genome sequence of Yersinia pestis, the causative agent of plague.</title>
        <authorList>
            <person name="Parkhill J."/>
            <person name="Wren B.W."/>
            <person name="Thomson N.R."/>
            <person name="Titball R.W."/>
            <person name="Holden M.T.G."/>
            <person name="Prentice M.B."/>
            <person name="Sebaihia M."/>
            <person name="James K.D."/>
            <person name="Churcher C.M."/>
            <person name="Mungall K.L."/>
            <person name="Baker S."/>
            <person name="Basham D."/>
            <person name="Bentley S.D."/>
            <person name="Brooks K."/>
            <person name="Cerdeno-Tarraga A.-M."/>
            <person name="Chillingworth T."/>
            <person name="Cronin A."/>
            <person name="Davies R.M."/>
            <person name="Davis P."/>
            <person name="Dougan G."/>
            <person name="Feltwell T."/>
            <person name="Hamlin N."/>
            <person name="Holroyd S."/>
            <person name="Jagels K."/>
            <person name="Karlyshev A.V."/>
            <person name="Leather S."/>
            <person name="Moule S."/>
            <person name="Oyston P.C.F."/>
            <person name="Quail M.A."/>
            <person name="Rutherford K.M."/>
            <person name="Simmonds M."/>
            <person name="Skelton J."/>
            <person name="Stevens K."/>
            <person name="Whitehead S."/>
            <person name="Barrell B.G."/>
        </authorList>
    </citation>
    <scope>NUCLEOTIDE SEQUENCE [LARGE SCALE GENOMIC DNA]</scope>
    <source>
        <strain>CO-92 / Biovar Orientalis</strain>
    </source>
</reference>
<reference key="3">
    <citation type="journal article" date="2004" name="DNA Res.">
        <title>Complete genome sequence of Yersinia pestis strain 91001, an isolate avirulent to humans.</title>
        <authorList>
            <person name="Song Y."/>
            <person name="Tong Z."/>
            <person name="Wang J."/>
            <person name="Wang L."/>
            <person name="Guo Z."/>
            <person name="Han Y."/>
            <person name="Zhang J."/>
            <person name="Pei D."/>
            <person name="Zhou D."/>
            <person name="Qin H."/>
            <person name="Pang X."/>
            <person name="Han Y."/>
            <person name="Zhai J."/>
            <person name="Li M."/>
            <person name="Cui B."/>
            <person name="Qi Z."/>
            <person name="Jin L."/>
            <person name="Dai R."/>
            <person name="Chen F."/>
            <person name="Li S."/>
            <person name="Ye C."/>
            <person name="Du Z."/>
            <person name="Lin W."/>
            <person name="Wang J."/>
            <person name="Yu J."/>
            <person name="Yang H."/>
            <person name="Wang J."/>
            <person name="Huang P."/>
            <person name="Yang R."/>
        </authorList>
    </citation>
    <scope>NUCLEOTIDE SEQUENCE [LARGE SCALE GENOMIC DNA]</scope>
    <source>
        <strain>91001 / Biovar Mediaevalis</strain>
    </source>
</reference>
<gene>
    <name evidence="1" type="primary">ubiA</name>
    <name type="ordered locus">YPO0311</name>
    <name type="ordered locus">y0569</name>
    <name type="ordered locus">YP_0467</name>
</gene>
<keyword id="KW-0997">Cell inner membrane</keyword>
<keyword id="KW-1003">Cell membrane</keyword>
<keyword id="KW-0460">Magnesium</keyword>
<keyword id="KW-0472">Membrane</keyword>
<keyword id="KW-1185">Reference proteome</keyword>
<keyword id="KW-0808">Transferase</keyword>
<keyword id="KW-0812">Transmembrane</keyword>
<keyword id="KW-1133">Transmembrane helix</keyword>
<keyword id="KW-0831">Ubiquinone biosynthesis</keyword>
<organism>
    <name type="scientific">Yersinia pestis</name>
    <dbReference type="NCBI Taxonomy" id="632"/>
    <lineage>
        <taxon>Bacteria</taxon>
        <taxon>Pseudomonadati</taxon>
        <taxon>Pseudomonadota</taxon>
        <taxon>Gammaproteobacteria</taxon>
        <taxon>Enterobacterales</taxon>
        <taxon>Yersiniaceae</taxon>
        <taxon>Yersinia</taxon>
    </lineage>
</organism>
<protein>
    <recommendedName>
        <fullName evidence="1">4-hydroxybenzoate octaprenyltransferase</fullName>
        <ecNumber evidence="1">2.5.1.39</ecNumber>
    </recommendedName>
    <alternativeName>
        <fullName evidence="1">4-HB polyprenyltransferase</fullName>
    </alternativeName>
</protein>
<evidence type="ECO:0000255" key="1">
    <source>
        <dbReference type="HAMAP-Rule" id="MF_01635"/>
    </source>
</evidence>